<protein>
    <recommendedName>
        <fullName evidence="1">Small ribosomal subunit protein uS11</fullName>
    </recommendedName>
    <alternativeName>
        <fullName evidence="2">30S ribosomal protein S11</fullName>
    </alternativeName>
</protein>
<gene>
    <name evidence="1" type="primary">rpsK</name>
    <name type="ordered locus">A1G_05440</name>
</gene>
<organism>
    <name type="scientific">Rickettsia rickettsii (strain Sheila Smith)</name>
    <dbReference type="NCBI Taxonomy" id="392021"/>
    <lineage>
        <taxon>Bacteria</taxon>
        <taxon>Pseudomonadati</taxon>
        <taxon>Pseudomonadota</taxon>
        <taxon>Alphaproteobacteria</taxon>
        <taxon>Rickettsiales</taxon>
        <taxon>Rickettsiaceae</taxon>
        <taxon>Rickettsieae</taxon>
        <taxon>Rickettsia</taxon>
        <taxon>spotted fever group</taxon>
    </lineage>
</organism>
<sequence>MNQTVKVKKKKKTITLGVVHIRASFNNTIVTFTDIQGNTISSASAGGNGFKGARKATPYAAQVTVDRASEKAKEYGLKTISIRIGGPGAQRESAMRALFGQNFVVTSILDVSSIAHNGVRPPKRRRV</sequence>
<keyword id="KW-0687">Ribonucleoprotein</keyword>
<keyword id="KW-0689">Ribosomal protein</keyword>
<keyword id="KW-0694">RNA-binding</keyword>
<keyword id="KW-0699">rRNA-binding</keyword>
<dbReference type="EMBL" id="CP000848">
    <property type="protein sequence ID" value="ABV76571.1"/>
    <property type="molecule type" value="Genomic_DNA"/>
</dbReference>
<dbReference type="RefSeq" id="WP_012151134.1">
    <property type="nucleotide sequence ID" value="NZ_CP121767.1"/>
</dbReference>
<dbReference type="SMR" id="A8GT46"/>
<dbReference type="GeneID" id="79937647"/>
<dbReference type="KEGG" id="rri:A1G_05440"/>
<dbReference type="HOGENOM" id="CLU_072439_5_0_5"/>
<dbReference type="Proteomes" id="UP000006832">
    <property type="component" value="Chromosome"/>
</dbReference>
<dbReference type="GO" id="GO:1990904">
    <property type="term" value="C:ribonucleoprotein complex"/>
    <property type="evidence" value="ECO:0007669"/>
    <property type="project" value="UniProtKB-KW"/>
</dbReference>
<dbReference type="GO" id="GO:0005840">
    <property type="term" value="C:ribosome"/>
    <property type="evidence" value="ECO:0007669"/>
    <property type="project" value="UniProtKB-KW"/>
</dbReference>
<dbReference type="GO" id="GO:0019843">
    <property type="term" value="F:rRNA binding"/>
    <property type="evidence" value="ECO:0007669"/>
    <property type="project" value="UniProtKB-UniRule"/>
</dbReference>
<dbReference type="GO" id="GO:0003735">
    <property type="term" value="F:structural constituent of ribosome"/>
    <property type="evidence" value="ECO:0007669"/>
    <property type="project" value="InterPro"/>
</dbReference>
<dbReference type="GO" id="GO:0006412">
    <property type="term" value="P:translation"/>
    <property type="evidence" value="ECO:0007669"/>
    <property type="project" value="UniProtKB-UniRule"/>
</dbReference>
<dbReference type="Gene3D" id="3.30.420.80">
    <property type="entry name" value="Ribosomal protein S11"/>
    <property type="match status" value="1"/>
</dbReference>
<dbReference type="HAMAP" id="MF_01310">
    <property type="entry name" value="Ribosomal_uS11"/>
    <property type="match status" value="1"/>
</dbReference>
<dbReference type="InterPro" id="IPR001971">
    <property type="entry name" value="Ribosomal_uS11"/>
</dbReference>
<dbReference type="InterPro" id="IPR019981">
    <property type="entry name" value="Ribosomal_uS11_bac-type"/>
</dbReference>
<dbReference type="InterPro" id="IPR018102">
    <property type="entry name" value="Ribosomal_uS11_CS"/>
</dbReference>
<dbReference type="InterPro" id="IPR036967">
    <property type="entry name" value="Ribosomal_uS11_sf"/>
</dbReference>
<dbReference type="NCBIfam" id="NF003698">
    <property type="entry name" value="PRK05309.1"/>
    <property type="match status" value="1"/>
</dbReference>
<dbReference type="NCBIfam" id="TIGR03632">
    <property type="entry name" value="uS11_bact"/>
    <property type="match status" value="1"/>
</dbReference>
<dbReference type="PANTHER" id="PTHR11759">
    <property type="entry name" value="40S RIBOSOMAL PROTEIN S14/30S RIBOSOMAL PROTEIN S11"/>
    <property type="match status" value="1"/>
</dbReference>
<dbReference type="Pfam" id="PF00411">
    <property type="entry name" value="Ribosomal_S11"/>
    <property type="match status" value="1"/>
</dbReference>
<dbReference type="PIRSF" id="PIRSF002131">
    <property type="entry name" value="Ribosomal_S11"/>
    <property type="match status" value="1"/>
</dbReference>
<dbReference type="SUPFAM" id="SSF53137">
    <property type="entry name" value="Translational machinery components"/>
    <property type="match status" value="1"/>
</dbReference>
<dbReference type="PROSITE" id="PS00054">
    <property type="entry name" value="RIBOSOMAL_S11"/>
    <property type="match status" value="1"/>
</dbReference>
<feature type="chain" id="PRO_1000051851" description="Small ribosomal subunit protein uS11">
    <location>
        <begin position="1"/>
        <end position="127"/>
    </location>
</feature>
<reference key="1">
    <citation type="submission" date="2007-09" db="EMBL/GenBank/DDBJ databases">
        <title>Complete genome sequence of Rickettsia rickettsii.</title>
        <authorList>
            <person name="Madan A."/>
            <person name="Fahey J."/>
            <person name="Helton E."/>
            <person name="Ketteman M."/>
            <person name="Madan A."/>
            <person name="Rodrigues S."/>
            <person name="Sanchez A."/>
            <person name="Dasch G."/>
            <person name="Eremeeva M."/>
        </authorList>
    </citation>
    <scope>NUCLEOTIDE SEQUENCE [LARGE SCALE GENOMIC DNA]</scope>
    <source>
        <strain>Sheila Smith</strain>
    </source>
</reference>
<proteinExistence type="inferred from homology"/>
<evidence type="ECO:0000255" key="1">
    <source>
        <dbReference type="HAMAP-Rule" id="MF_01310"/>
    </source>
</evidence>
<evidence type="ECO:0000305" key="2"/>
<comment type="function">
    <text evidence="1">Located on the platform of the 30S subunit, it bridges several disparate RNA helices of the 16S rRNA. Forms part of the Shine-Dalgarno cleft in the 70S ribosome.</text>
</comment>
<comment type="subunit">
    <text evidence="1">Part of the 30S ribosomal subunit. Interacts with proteins S7 and S18. Binds to IF-3.</text>
</comment>
<comment type="similarity">
    <text evidence="1">Belongs to the universal ribosomal protein uS11 family.</text>
</comment>
<accession>A8GT46</accession>
<name>RS11_RICRS</name>